<organism>
    <name type="scientific">Homo sapiens</name>
    <name type="common">Human</name>
    <dbReference type="NCBI Taxonomy" id="9606"/>
    <lineage>
        <taxon>Eukaryota</taxon>
        <taxon>Metazoa</taxon>
        <taxon>Chordata</taxon>
        <taxon>Craniata</taxon>
        <taxon>Vertebrata</taxon>
        <taxon>Euteleostomi</taxon>
        <taxon>Mammalia</taxon>
        <taxon>Eutheria</taxon>
        <taxon>Euarchontoglires</taxon>
        <taxon>Primates</taxon>
        <taxon>Haplorrhini</taxon>
        <taxon>Catarrhini</taxon>
        <taxon>Hominidae</taxon>
        <taxon>Homo</taxon>
    </lineage>
</organism>
<gene>
    <name type="primary">KCNJ15</name>
    <name type="synonym">KCNJ14</name>
</gene>
<protein>
    <recommendedName>
        <fullName>ATP-sensitive inward rectifier potassium channel 15</fullName>
    </recommendedName>
    <alternativeName>
        <fullName>Inward rectifier K(+) channel Kir1.3</fullName>
    </alternativeName>
    <alternativeName>
        <fullName evidence="10">Inward rectifier K(+) channel Kir4.2</fullName>
    </alternativeName>
    <alternativeName>
        <fullName>Potassium channel, inwardly rectifying subfamily J member 15</fullName>
    </alternativeName>
</protein>
<dbReference type="EMBL" id="Y10745">
    <property type="protein sequence ID" value="CAA71734.1"/>
    <property type="molecule type" value="mRNA"/>
</dbReference>
<dbReference type="EMBL" id="U73191">
    <property type="protein sequence ID" value="AAC50922.1"/>
    <property type="molecule type" value="mRNA"/>
</dbReference>
<dbReference type="EMBL" id="D87291">
    <property type="protein sequence ID" value="BAA13326.1"/>
    <property type="molecule type" value="mRNA"/>
</dbReference>
<dbReference type="EMBL" id="AP001434">
    <property type="status" value="NOT_ANNOTATED_CDS"/>
    <property type="molecule type" value="Genomic_DNA"/>
</dbReference>
<dbReference type="EMBL" id="CH471079">
    <property type="protein sequence ID" value="EAX09683.1"/>
    <property type="molecule type" value="Genomic_DNA"/>
</dbReference>
<dbReference type="EMBL" id="CH471079">
    <property type="protein sequence ID" value="EAX09684.1"/>
    <property type="molecule type" value="Genomic_DNA"/>
</dbReference>
<dbReference type="EMBL" id="BC013327">
    <property type="protein sequence ID" value="AAH13327.1"/>
    <property type="molecule type" value="mRNA"/>
</dbReference>
<dbReference type="CCDS" id="CCDS13656.1"/>
<dbReference type="RefSeq" id="NP_001263364.1">
    <property type="nucleotide sequence ID" value="NM_001276435.2"/>
</dbReference>
<dbReference type="RefSeq" id="NP_001263365.1">
    <property type="nucleotide sequence ID" value="NM_001276436.2"/>
</dbReference>
<dbReference type="RefSeq" id="NP_001263366.1">
    <property type="nucleotide sequence ID" value="NM_001276437.2"/>
</dbReference>
<dbReference type="RefSeq" id="NP_001263367.1">
    <property type="nucleotide sequence ID" value="NM_001276438.2"/>
</dbReference>
<dbReference type="RefSeq" id="NP_001263368.1">
    <property type="nucleotide sequence ID" value="NM_001276439.2"/>
</dbReference>
<dbReference type="RefSeq" id="NP_002234.2">
    <property type="nucleotide sequence ID" value="NM_002243.4"/>
</dbReference>
<dbReference type="RefSeq" id="NP_733932.1">
    <property type="nucleotide sequence ID" value="NM_170736.3"/>
</dbReference>
<dbReference type="RefSeq" id="NP_733933.1">
    <property type="nucleotide sequence ID" value="NM_170737.3"/>
</dbReference>
<dbReference type="RefSeq" id="XP_005261032.1">
    <property type="nucleotide sequence ID" value="XM_005260975.2"/>
</dbReference>
<dbReference type="RefSeq" id="XP_006724065.1">
    <property type="nucleotide sequence ID" value="XM_006724002.2"/>
</dbReference>
<dbReference type="RefSeq" id="XP_011527862.1">
    <property type="nucleotide sequence ID" value="XM_011529560.2"/>
</dbReference>
<dbReference type="RefSeq" id="XP_011527863.1">
    <property type="nucleotide sequence ID" value="XM_011529561.2"/>
</dbReference>
<dbReference type="RefSeq" id="XP_016883832.1">
    <property type="nucleotide sequence ID" value="XM_017028343.1"/>
</dbReference>
<dbReference type="RefSeq" id="XP_016883833.1">
    <property type="nucleotide sequence ID" value="XM_017028344.1"/>
</dbReference>
<dbReference type="RefSeq" id="XP_016883834.1">
    <property type="nucleotide sequence ID" value="XM_017028345.1"/>
</dbReference>
<dbReference type="SMR" id="Q99712"/>
<dbReference type="BioGRID" id="109974">
    <property type="interactions" value="8"/>
</dbReference>
<dbReference type="FunCoup" id="Q99712">
    <property type="interactions" value="377"/>
</dbReference>
<dbReference type="IntAct" id="Q99712">
    <property type="interactions" value="5"/>
</dbReference>
<dbReference type="MINT" id="Q99712"/>
<dbReference type="STRING" id="9606.ENSP00000381911"/>
<dbReference type="DrugBank" id="DB11148">
    <property type="generic name" value="Butamben"/>
</dbReference>
<dbReference type="DrugBank" id="DB00867">
    <property type="generic name" value="Ritodrine"/>
</dbReference>
<dbReference type="DrugBank" id="DB01392">
    <property type="generic name" value="Yohimbine"/>
</dbReference>
<dbReference type="iPTMnet" id="Q99712"/>
<dbReference type="PhosphoSitePlus" id="Q99712"/>
<dbReference type="BioMuta" id="KCNJ15"/>
<dbReference type="DMDM" id="77416869"/>
<dbReference type="jPOST" id="Q99712"/>
<dbReference type="MassIVE" id="Q99712"/>
<dbReference type="PaxDb" id="9606-ENSP00000331698"/>
<dbReference type="PeptideAtlas" id="Q99712"/>
<dbReference type="ProteomicsDB" id="78426"/>
<dbReference type="Antibodypedia" id="3029">
    <property type="antibodies" value="184 antibodies from 29 providers"/>
</dbReference>
<dbReference type="DNASU" id="3772"/>
<dbReference type="Ensembl" id="ENST00000328656.8">
    <property type="protein sequence ID" value="ENSP00000331698.3"/>
    <property type="gene ID" value="ENSG00000157551.19"/>
</dbReference>
<dbReference type="Ensembl" id="ENST00000398930.5">
    <property type="protein sequence ID" value="ENSP00000381904.1"/>
    <property type="gene ID" value="ENSG00000157551.19"/>
</dbReference>
<dbReference type="Ensembl" id="ENST00000398932.5">
    <property type="protein sequence ID" value="ENSP00000381905.1"/>
    <property type="gene ID" value="ENSG00000157551.19"/>
</dbReference>
<dbReference type="Ensembl" id="ENST00000398934.5">
    <property type="protein sequence ID" value="ENSP00000381907.1"/>
    <property type="gene ID" value="ENSG00000157551.19"/>
</dbReference>
<dbReference type="Ensembl" id="ENST00000398938.7">
    <property type="protein sequence ID" value="ENSP00000381911.2"/>
    <property type="gene ID" value="ENSG00000157551.19"/>
</dbReference>
<dbReference type="Ensembl" id="ENST00000612702.4">
    <property type="protein sequence ID" value="ENSP00000484960.1"/>
    <property type="gene ID" value="ENSG00000157551.19"/>
</dbReference>
<dbReference type="Ensembl" id="ENST00000613499.4">
    <property type="protein sequence ID" value="ENSP00000479100.1"/>
    <property type="gene ID" value="ENSG00000157551.19"/>
</dbReference>
<dbReference type="GeneID" id="3772"/>
<dbReference type="KEGG" id="hsa:3772"/>
<dbReference type="MANE-Select" id="ENST00000398938.7">
    <property type="protein sequence ID" value="ENSP00000381911.2"/>
    <property type="RefSeq nucleotide sequence ID" value="NM_170736.3"/>
    <property type="RefSeq protein sequence ID" value="NP_733932.1"/>
</dbReference>
<dbReference type="UCSC" id="uc002ywv.5">
    <property type="organism name" value="human"/>
</dbReference>
<dbReference type="AGR" id="HGNC:6261"/>
<dbReference type="CTD" id="3772"/>
<dbReference type="DisGeNET" id="3772"/>
<dbReference type="GeneCards" id="KCNJ15"/>
<dbReference type="HGNC" id="HGNC:6261">
    <property type="gene designation" value="KCNJ15"/>
</dbReference>
<dbReference type="HPA" id="ENSG00000157551">
    <property type="expression patterns" value="Tissue enhanced (kidney, thyroid gland)"/>
</dbReference>
<dbReference type="MIM" id="602106">
    <property type="type" value="gene"/>
</dbReference>
<dbReference type="neXtProt" id="NX_Q99712"/>
<dbReference type="OpenTargets" id="ENSG00000157551"/>
<dbReference type="PharmGKB" id="PA30046"/>
<dbReference type="VEuPathDB" id="HostDB:ENSG00000157551"/>
<dbReference type="eggNOG" id="KOG3827">
    <property type="taxonomic scope" value="Eukaryota"/>
</dbReference>
<dbReference type="GeneTree" id="ENSGT00990000203615"/>
<dbReference type="HOGENOM" id="CLU_022738_3_3_1"/>
<dbReference type="InParanoid" id="Q99712"/>
<dbReference type="OMA" id="LPMHRST"/>
<dbReference type="OrthoDB" id="273257at2759"/>
<dbReference type="PAN-GO" id="Q99712">
    <property type="GO annotations" value="4 GO annotations based on evolutionary models"/>
</dbReference>
<dbReference type="PhylomeDB" id="Q99712"/>
<dbReference type="TreeFam" id="TF313676"/>
<dbReference type="PathwayCommons" id="Q99712"/>
<dbReference type="Reactome" id="R-HSA-1296041">
    <property type="pathway name" value="Activation of G protein gated Potassium channels"/>
</dbReference>
<dbReference type="Reactome" id="R-HSA-997272">
    <property type="pathway name" value="Inhibition of voltage gated Ca2+ channels via Gbeta/gamma subunits"/>
</dbReference>
<dbReference type="SignaLink" id="Q99712"/>
<dbReference type="BioGRID-ORCS" id="3772">
    <property type="hits" value="17 hits in 1151 CRISPR screens"/>
</dbReference>
<dbReference type="ChiTaRS" id="KCNJ15">
    <property type="organism name" value="human"/>
</dbReference>
<dbReference type="GeneWiki" id="KCNJ15"/>
<dbReference type="GenomeRNAi" id="3772"/>
<dbReference type="Pharos" id="Q99712">
    <property type="development level" value="Tbio"/>
</dbReference>
<dbReference type="PRO" id="PR:Q99712"/>
<dbReference type="Proteomes" id="UP000005640">
    <property type="component" value="Chromosome 21"/>
</dbReference>
<dbReference type="RNAct" id="Q99712">
    <property type="molecule type" value="protein"/>
</dbReference>
<dbReference type="Bgee" id="ENSG00000157551">
    <property type="expression patterns" value="Expressed in nephron tubule and 161 other cell types or tissues"/>
</dbReference>
<dbReference type="ExpressionAtlas" id="Q99712">
    <property type="expression patterns" value="baseline and differential"/>
</dbReference>
<dbReference type="GO" id="GO:0034702">
    <property type="term" value="C:monoatomic ion channel complex"/>
    <property type="evidence" value="ECO:0007669"/>
    <property type="project" value="UniProtKB-KW"/>
</dbReference>
<dbReference type="GO" id="GO:0005886">
    <property type="term" value="C:plasma membrane"/>
    <property type="evidence" value="ECO:0000318"/>
    <property type="project" value="GO_Central"/>
</dbReference>
<dbReference type="GO" id="GO:0005242">
    <property type="term" value="F:inward rectifier potassium channel activity"/>
    <property type="evidence" value="ECO:0000318"/>
    <property type="project" value="GO_Central"/>
</dbReference>
<dbReference type="GO" id="GO:1990573">
    <property type="term" value="P:potassium ion import across plasma membrane"/>
    <property type="evidence" value="ECO:0000318"/>
    <property type="project" value="GO_Central"/>
</dbReference>
<dbReference type="GO" id="GO:0006813">
    <property type="term" value="P:potassium ion transport"/>
    <property type="evidence" value="ECO:0000304"/>
    <property type="project" value="ProtInc"/>
</dbReference>
<dbReference type="GO" id="GO:0034765">
    <property type="term" value="P:regulation of monoatomic ion transmembrane transport"/>
    <property type="evidence" value="ECO:0000318"/>
    <property type="project" value="GO_Central"/>
</dbReference>
<dbReference type="FunFam" id="1.10.287.70:FF:000036">
    <property type="entry name" value="ATP-sensitive inward rectifier potassium channel 1"/>
    <property type="match status" value="1"/>
</dbReference>
<dbReference type="FunFam" id="2.60.40.1400:FF:000002">
    <property type="entry name" value="ATP-sensitive inward rectifier potassium channel 1"/>
    <property type="match status" value="1"/>
</dbReference>
<dbReference type="Gene3D" id="1.10.287.70">
    <property type="match status" value="1"/>
</dbReference>
<dbReference type="Gene3D" id="2.60.40.1400">
    <property type="entry name" value="G protein-activated inward rectifier potassium channel 1"/>
    <property type="match status" value="1"/>
</dbReference>
<dbReference type="InterPro" id="IPR014756">
    <property type="entry name" value="Ig_E-set"/>
</dbReference>
<dbReference type="InterPro" id="IPR041647">
    <property type="entry name" value="IRK_C"/>
</dbReference>
<dbReference type="InterPro" id="IPR016449">
    <property type="entry name" value="K_chnl_inward-rec_Kir"/>
</dbReference>
<dbReference type="InterPro" id="IPR003270">
    <property type="entry name" value="K_chnl_inward-rec_Kir1.3"/>
</dbReference>
<dbReference type="InterPro" id="IPR013518">
    <property type="entry name" value="K_chnl_inward-rec_Kir_cyto"/>
</dbReference>
<dbReference type="InterPro" id="IPR040445">
    <property type="entry name" value="Kir_TM"/>
</dbReference>
<dbReference type="PANTHER" id="PTHR11767:SF20">
    <property type="entry name" value="ATP-SENSITIVE INWARD RECTIFIER POTASSIUM CHANNEL 15"/>
    <property type="match status" value="1"/>
</dbReference>
<dbReference type="PANTHER" id="PTHR11767">
    <property type="entry name" value="INWARD RECTIFIER POTASSIUM CHANNEL"/>
    <property type="match status" value="1"/>
</dbReference>
<dbReference type="Pfam" id="PF01007">
    <property type="entry name" value="IRK"/>
    <property type="match status" value="1"/>
</dbReference>
<dbReference type="Pfam" id="PF17655">
    <property type="entry name" value="IRK_C"/>
    <property type="match status" value="1"/>
</dbReference>
<dbReference type="PIRSF" id="PIRSF005465">
    <property type="entry name" value="GIRK_kir"/>
    <property type="match status" value="1"/>
</dbReference>
<dbReference type="PRINTS" id="PR01323">
    <property type="entry name" value="KIR13CHANNEL"/>
</dbReference>
<dbReference type="PRINTS" id="PR01320">
    <property type="entry name" value="KIRCHANNEL"/>
</dbReference>
<dbReference type="SUPFAM" id="SSF81296">
    <property type="entry name" value="E set domains"/>
    <property type="match status" value="1"/>
</dbReference>
<dbReference type="SUPFAM" id="SSF81324">
    <property type="entry name" value="Voltage-gated potassium channels"/>
    <property type="match status" value="1"/>
</dbReference>
<comment type="function">
    <text evidence="2">Inward rectifier potassium channels are characterized by a greater tendency to allow potassium to flow into the cell rather than out of it. Their voltage dependence is regulated by the concentration of extracellular potassium; as external potassium is raised, the voltage range of the channel opening shifts to more positive voltages. The inward rectification is mainly due to the blockage of outward current by internal magnesium.</text>
</comment>
<comment type="catalytic activity">
    <reaction evidence="2">
        <text>K(+)(in) = K(+)(out)</text>
        <dbReference type="Rhea" id="RHEA:29463"/>
        <dbReference type="ChEBI" id="CHEBI:29103"/>
    </reaction>
</comment>
<comment type="activity regulation">
    <text evidence="2">Channel activity is regulated by variations of cytosolic pH; reversibly inhibited by acidic pH values. Inhibited by Ba(2+) and Cs(+) in a voltage-dependent manner.</text>
</comment>
<comment type="subunit">
    <text evidence="2 8">Can form heteromultimeric channels with Kir5.1/KCNJ16 (By similarity). Interacts with PATJ (PubMed:9647694).</text>
</comment>
<comment type="interaction">
    <interactant intactId="EBI-7082607">
        <id>Q99712</id>
    </interactant>
    <interactant intactId="EBI-703457">
        <id>P63252</id>
        <label>KCNJ2</label>
    </interactant>
    <organismsDiffer>false</organismsDiffer>
    <experiments>3</experiments>
</comment>
<comment type="interaction">
    <interactant intactId="EBI-7082607">
        <id>Q99712</id>
    </interactant>
    <interactant intactId="EBI-9975563">
        <id>P48544</id>
        <label>KCNJ5</label>
    </interactant>
    <organismsDiffer>false</organismsDiffer>
    <experiments>3</experiments>
</comment>
<comment type="interaction">
    <interactant intactId="EBI-7082607">
        <id>Q99712</id>
    </interactant>
    <interactant intactId="EBI-8366894">
        <id>Q63ZW7</id>
        <label>Patj</label>
    </interactant>
    <organismsDiffer>true</organismsDiffer>
    <experiments>4</experiments>
</comment>
<comment type="subcellular location">
    <subcellularLocation>
        <location evidence="5">Membrane</location>
        <topology evidence="5">Multi-pass membrane protein</topology>
    </subcellularLocation>
    <subcellularLocation>
        <location evidence="4">Cell membrane</location>
    </subcellularLocation>
</comment>
<comment type="similarity">
    <text evidence="11">Belongs to the inward rectifier-type potassium channel (TC 1.A.2.1) family. KCNJ15 subfamily.</text>
</comment>
<reference key="1">
    <citation type="journal article" date="1997" name="Genomics">
        <title>A new inward rectifier potassium channel gene (KCNJ15) localized on chromosome 21 in the Down syndrome chromosome region 1 (DCR1).</title>
        <authorList>
            <person name="Gosset P."/>
            <person name="Ghezala G.A."/>
            <person name="Korn B."/>
            <person name="Yaspo M.-L."/>
            <person name="Poutska A."/>
            <person name="Lehrach H."/>
            <person name="Sinet P.-M."/>
            <person name="Creau N."/>
        </authorList>
    </citation>
    <scope>NUCLEOTIDE SEQUENCE [MRNA]</scope>
</reference>
<reference key="2">
    <citation type="journal article" date="1997" name="J. Biol. Chem.">
        <title>Cloning and characterization of two K+ inward rectifier (Kir) 1.1 potassium channel homologs from human kidney (Kir1.2 and Kir1.3).</title>
        <authorList>
            <person name="Shuck M.E."/>
            <person name="Piser T.M."/>
            <person name="Bock J.H."/>
            <person name="Slightom J.L."/>
            <person name="Lee K.S."/>
            <person name="Bienkowski M.J."/>
        </authorList>
    </citation>
    <scope>NUCLEOTIDE SEQUENCE [MRNA]</scope>
    <scope>VARIANT ASP-98</scope>
    <source>
        <tissue>Kidney</tissue>
    </source>
</reference>
<reference key="3">
    <citation type="submission" date="1997-01" db="EMBL/GenBank/DDBJ databases">
        <authorList>
            <person name="Ohira M."/>
            <person name="Seki N."/>
            <person name="Nagase T."/>
            <person name="Suzuki E."/>
            <person name="Nomura N."/>
            <person name="Ohara O."/>
            <person name="Hattori M."/>
            <person name="Sakaki Y."/>
            <person name="Eki T."/>
            <person name="Murakami Y."/>
            <person name="Saito T."/>
            <person name="Ichikawa H."/>
            <person name="Ohki M."/>
        </authorList>
    </citation>
    <scope>NUCLEOTIDE SEQUENCE [MRNA]</scope>
    <scope>VARIANT ASP-98</scope>
    <source>
        <tissue>Kidney</tissue>
    </source>
</reference>
<reference key="4">
    <citation type="journal article" date="2000" name="Nature">
        <title>The DNA sequence of human chromosome 21.</title>
        <authorList>
            <person name="Hattori M."/>
            <person name="Fujiyama A."/>
            <person name="Taylor T.D."/>
            <person name="Watanabe H."/>
            <person name="Yada T."/>
            <person name="Park H.-S."/>
            <person name="Toyoda A."/>
            <person name="Ishii K."/>
            <person name="Totoki Y."/>
            <person name="Choi D.-K."/>
            <person name="Groner Y."/>
            <person name="Soeda E."/>
            <person name="Ohki M."/>
            <person name="Takagi T."/>
            <person name="Sakaki Y."/>
            <person name="Taudien S."/>
            <person name="Blechschmidt K."/>
            <person name="Polley A."/>
            <person name="Menzel U."/>
            <person name="Delabar J."/>
            <person name="Kumpf K."/>
            <person name="Lehmann R."/>
            <person name="Patterson D."/>
            <person name="Reichwald K."/>
            <person name="Rump A."/>
            <person name="Schillhabel M."/>
            <person name="Schudy A."/>
            <person name="Zimmermann W."/>
            <person name="Rosenthal A."/>
            <person name="Kudoh J."/>
            <person name="Shibuya K."/>
            <person name="Kawasaki K."/>
            <person name="Asakawa S."/>
            <person name="Shintani A."/>
            <person name="Sasaki T."/>
            <person name="Nagamine K."/>
            <person name="Mitsuyama S."/>
            <person name="Antonarakis S.E."/>
            <person name="Minoshima S."/>
            <person name="Shimizu N."/>
            <person name="Nordsiek G."/>
            <person name="Hornischer K."/>
            <person name="Brandt P."/>
            <person name="Scharfe M."/>
            <person name="Schoen O."/>
            <person name="Desario A."/>
            <person name="Reichelt J."/>
            <person name="Kauer G."/>
            <person name="Bloecker H."/>
            <person name="Ramser J."/>
            <person name="Beck A."/>
            <person name="Klages S."/>
            <person name="Hennig S."/>
            <person name="Riesselmann L."/>
            <person name="Dagand E."/>
            <person name="Wehrmeyer S."/>
            <person name="Borzym K."/>
            <person name="Gardiner K."/>
            <person name="Nizetic D."/>
            <person name="Francis F."/>
            <person name="Lehrach H."/>
            <person name="Reinhardt R."/>
            <person name="Yaspo M.-L."/>
        </authorList>
    </citation>
    <scope>NUCLEOTIDE SEQUENCE [LARGE SCALE GENOMIC DNA]</scope>
</reference>
<reference key="5">
    <citation type="submission" date="2005-09" db="EMBL/GenBank/DDBJ databases">
        <authorList>
            <person name="Mural R.J."/>
            <person name="Istrail S."/>
            <person name="Sutton G.G."/>
            <person name="Florea L."/>
            <person name="Halpern A.L."/>
            <person name="Mobarry C.M."/>
            <person name="Lippert R."/>
            <person name="Walenz B."/>
            <person name="Shatkay H."/>
            <person name="Dew I."/>
            <person name="Miller J.R."/>
            <person name="Flanigan M.J."/>
            <person name="Edwards N.J."/>
            <person name="Bolanos R."/>
            <person name="Fasulo D."/>
            <person name="Halldorsson B.V."/>
            <person name="Hannenhalli S."/>
            <person name="Turner R."/>
            <person name="Yooseph S."/>
            <person name="Lu F."/>
            <person name="Nusskern D.R."/>
            <person name="Shue B.C."/>
            <person name="Zheng X.H."/>
            <person name="Zhong F."/>
            <person name="Delcher A.L."/>
            <person name="Huson D.H."/>
            <person name="Kravitz S.A."/>
            <person name="Mouchard L."/>
            <person name="Reinert K."/>
            <person name="Remington K.A."/>
            <person name="Clark A.G."/>
            <person name="Waterman M.S."/>
            <person name="Eichler E.E."/>
            <person name="Adams M.D."/>
            <person name="Hunkapiller M.W."/>
            <person name="Myers E.W."/>
            <person name="Venter J.C."/>
        </authorList>
    </citation>
    <scope>NUCLEOTIDE SEQUENCE [LARGE SCALE GENOMIC DNA]</scope>
</reference>
<reference key="6">
    <citation type="journal article" date="2004" name="Genome Res.">
        <title>The status, quality, and expansion of the NIH full-length cDNA project: the Mammalian Gene Collection (MGC).</title>
        <authorList>
            <consortium name="The MGC Project Team"/>
        </authorList>
    </citation>
    <scope>NUCLEOTIDE SEQUENCE [LARGE SCALE MRNA]</scope>
    <source>
        <tissue>Kidney</tissue>
    </source>
</reference>
<reference key="7">
    <citation type="journal article" date="1998" name="Mol. Cell. Neurosci.">
        <title>CIPP, a novel multivalent PDZ domain protein, selectively interacts with Kir4.0 family members, NMDA receptor subunits, neurexins, and neuroligins.</title>
        <authorList>
            <person name="Kurschner C."/>
            <person name="Mermelstein P.G."/>
            <person name="Holden W.T."/>
            <person name="Surmeier D.J."/>
        </authorList>
    </citation>
    <scope>INTERACTION WITH PATJ</scope>
</reference>
<reference key="8">
    <citation type="journal article" date="2006" name="Science">
        <title>The consensus coding sequences of human breast and colorectal cancers.</title>
        <authorList>
            <person name="Sjoeblom T."/>
            <person name="Jones S."/>
            <person name="Wood L.D."/>
            <person name="Parsons D.W."/>
            <person name="Lin J."/>
            <person name="Barber T.D."/>
            <person name="Mandelker D."/>
            <person name="Leary R.J."/>
            <person name="Ptak J."/>
            <person name="Silliman N."/>
            <person name="Szabo S."/>
            <person name="Buckhaults P."/>
            <person name="Farrell C."/>
            <person name="Meeh P."/>
            <person name="Markowitz S.D."/>
            <person name="Willis J."/>
            <person name="Dawson D."/>
            <person name="Willson J.K.V."/>
            <person name="Gazdar A.F."/>
            <person name="Hartigan J."/>
            <person name="Wu L."/>
            <person name="Liu C."/>
            <person name="Parmigiani G."/>
            <person name="Park B.H."/>
            <person name="Bachman K.E."/>
            <person name="Papadopoulos N."/>
            <person name="Vogelstein B."/>
            <person name="Kinzler K.W."/>
            <person name="Velculescu V.E."/>
        </authorList>
    </citation>
    <scope>VARIANT [LARGE SCALE ANALYSIS] THR-71</scope>
</reference>
<proteinExistence type="evidence at protein level"/>
<name>KCJ15_HUMAN</name>
<evidence type="ECO:0000250" key="1"/>
<evidence type="ECO:0000250" key="2">
    <source>
        <dbReference type="UniProtKB" id="O88932"/>
    </source>
</evidence>
<evidence type="ECO:0000250" key="3">
    <source>
        <dbReference type="UniProtKB" id="P49655"/>
    </source>
</evidence>
<evidence type="ECO:0000250" key="4">
    <source>
        <dbReference type="UniProtKB" id="Q91ZF1"/>
    </source>
</evidence>
<evidence type="ECO:0000255" key="5"/>
<evidence type="ECO:0000269" key="6">
    <source>
    </source>
</evidence>
<evidence type="ECO:0000269" key="7">
    <source>
    </source>
</evidence>
<evidence type="ECO:0000269" key="8">
    <source>
    </source>
</evidence>
<evidence type="ECO:0000269" key="9">
    <source ref="3"/>
</evidence>
<evidence type="ECO:0000303" key="10">
    <source>
    </source>
</evidence>
<evidence type="ECO:0000305" key="11"/>
<sequence length="375" mass="42577">MDAIHIGMSSTPLVKHTAGAGLKANRPRVMSKSGHSNVRIDKVDGIYLLYLQDLWTTVIDMKWRYKLTLFAATFVMTWFLFGVIYYAIAFIHGDLEPGEPISNHTPCIMKVDSLTGAFLFSLESQTTIGYGVRSITEECPHAIFLLVAQLVITTLIEIFITGTFLAKIARPKKRAETIKFSHCAVITKQNGKLCLVIQVANMRKSLLIQCQLSGKLLQTHVTKEGERILLNQATVKFHVDSSSESPFLILPMTFYHVLDETSPLRDLTPQNLKEKEFELVVLLNATVESTSAVCQSRTSYIPEEIYWGFEFVPVVSLSKNGKYVADFSQFEQIRKSPDCTFYCADSEKQQLEEKYRQEDQRERELRTLLLQQSNV</sequence>
<keyword id="KW-1003">Cell membrane</keyword>
<keyword id="KW-0407">Ion channel</keyword>
<keyword id="KW-0406">Ion transport</keyword>
<keyword id="KW-0472">Membrane</keyword>
<keyword id="KW-0630">Potassium</keyword>
<keyword id="KW-0633">Potassium transport</keyword>
<keyword id="KW-1267">Proteomics identification</keyword>
<keyword id="KW-1185">Reference proteome</keyword>
<keyword id="KW-0812">Transmembrane</keyword>
<keyword id="KW-1133">Transmembrane helix</keyword>
<keyword id="KW-0813">Transport</keyword>
<keyword id="KW-0851">Voltage-gated channel</keyword>
<accession>Q99712</accession>
<accession>D3DSH5</accession>
<accession>O00564</accession>
<accession>Q96L28</accession>
<accession>Q99446</accession>
<feature type="chain" id="PRO_0000154972" description="ATP-sensitive inward rectifier potassium channel 15">
    <location>
        <begin position="1"/>
        <end position="375"/>
    </location>
</feature>
<feature type="topological domain" description="Cytoplasmic" evidence="3">
    <location>
        <begin position="1"/>
        <end position="60"/>
    </location>
</feature>
<feature type="transmembrane region" description="Helical; Name=M1" evidence="3">
    <location>
        <begin position="61"/>
        <end position="87"/>
    </location>
</feature>
<feature type="topological domain" description="Extracellular" evidence="3">
    <location>
        <begin position="88"/>
        <end position="113"/>
    </location>
</feature>
<feature type="intramembrane region" description="Helical; Pore-forming; Name=H5" evidence="3">
    <location>
        <begin position="114"/>
        <end position="130"/>
    </location>
</feature>
<feature type="topological domain" description="Extracellular" evidence="3">
    <location>
        <begin position="131"/>
        <end position="139"/>
    </location>
</feature>
<feature type="transmembrane region" description="Helical; Name=M2" evidence="3">
    <location>
        <begin position="140"/>
        <end position="165"/>
    </location>
</feature>
<feature type="topological domain" description="Cytoplasmic" evidence="3">
    <location>
        <begin position="166"/>
        <end position="375"/>
    </location>
</feature>
<feature type="short sequence motif" description="Selectivity filter" evidence="11">
    <location>
        <begin position="127"/>
        <end position="132"/>
    </location>
</feature>
<feature type="site" description="Role in the control of polyamine-mediated channel gating and in the blocking by intracellular magnesium" evidence="1">
    <location>
        <position position="157"/>
    </location>
</feature>
<feature type="sequence variant" id="VAR_025523" description="In dbSNP:rs3746875.">
    <original>M</original>
    <variation>L</variation>
    <location>
        <position position="30"/>
    </location>
</feature>
<feature type="sequence variant" id="VAR_036427" description="In a breast cancer sample; somatic mutation; dbSNP:rs199857043." evidence="6">
    <original>A</original>
    <variation>T</variation>
    <location>
        <position position="71"/>
    </location>
</feature>
<feature type="sequence variant" id="VAR_019728" description="In dbSNP:rs2230033." evidence="7 9">
    <original>G</original>
    <variation>D</variation>
    <location>
        <position position="98"/>
    </location>
</feature>
<feature type="sequence conflict" description="In Ref. 1; CAA71734." evidence="11" ref="1">
    <original>V</original>
    <variation>A</variation>
    <location>
        <position position="235"/>
    </location>
</feature>
<feature type="sequence conflict" description="In Ref. 3; BAA13326." evidence="11" ref="3">
    <original>S</original>
    <variation>G</variation>
    <location>
        <position position="245"/>
    </location>
</feature>